<proteinExistence type="inferred from homology"/>
<organism>
    <name type="scientific">Penicillium rubens (strain ATCC 28089 / DSM 1075 / NRRL 1951 / Wisconsin 54-1255)</name>
    <name type="common">Penicillium chrysogenum</name>
    <dbReference type="NCBI Taxonomy" id="500485"/>
    <lineage>
        <taxon>Eukaryota</taxon>
        <taxon>Fungi</taxon>
        <taxon>Dikarya</taxon>
        <taxon>Ascomycota</taxon>
        <taxon>Pezizomycotina</taxon>
        <taxon>Eurotiomycetes</taxon>
        <taxon>Eurotiomycetidae</taxon>
        <taxon>Eurotiales</taxon>
        <taxon>Aspergillaceae</taxon>
        <taxon>Penicillium</taxon>
        <taxon>Penicillium chrysogenum species complex</taxon>
    </lineage>
</organism>
<keyword id="KW-0539">Nucleus</keyword>
<keyword id="KW-1185">Reference proteome</keyword>
<keyword id="KW-0677">Repeat</keyword>
<keyword id="KW-0690">Ribosome biogenesis</keyword>
<keyword id="KW-0698">rRNA processing</keyword>
<protein>
    <recommendedName>
        <fullName>Nucleolar protein 9</fullName>
    </recommendedName>
    <alternativeName>
        <fullName>Pumilio domain-containing protein nop9</fullName>
    </alternativeName>
</protein>
<sequence length="722" mass="81434">MPREQQKRGRRAEKKSQKEDSKRKFEETSEDPVAKRIKPSADDHETNEANDNIQLLENEDYIPLEQGEQQEGEQPDLDGDMPFYGLLDEEESEYFQRANEMLELNQFQDAEERSLFVDSVYSEANGKELKIACSQGCSRLMEKLISMSDARQLRRIFSKFIGHFLHLVQHRFASHCCETLFIHAAPAVMQKTKSQPKRSDEEGEEEPELSLADMFMAVIEELKENWGYLLTERFASHTIRVLLLVLAGEPVDVTSNESFVASRKKERIEIPTIQGEEKAGKSKAEKHTVPETFEPALKKIMTDMVAGLDDVYLRALATHPVGNPVLQVLLFLELSHFGKSSAKDPKSTIRRLVPDESFEEGSESAVFISGLLYDAVGSRLLETMVRYLPGKSFKNLYRNNLGDRIGSLSRNSTAGYVVLRMLERLGKDDLKIAMANINPEVPGLIERSRLIVPKMLIERCMVRGVDTKPLAEALEGAYSKDPAVRLQQMLKFNISENTAPQSEDHDMEEDNDGKDRKPRGPPPVSAAEKAEKLHASLLVQAMLTVPGPMSQLVYTSLLAQSSETIVQLAQEPTSSRVLQQALTSTTSTPQIRRQLTTRFQGYLTPLALSSSGSHVVDALWSATKDIFFVKERMAQELEQHEQELRDSFVGRAVWRNWSMDLFKRRRRDWTHKAKGFEERTEGNEGAERPKSKIEQARARYAAAKEAADAGATGANQTTVASR</sequence>
<accession>B6H3T4</accession>
<feature type="chain" id="PRO_0000407824" description="Nucleolar protein 9">
    <location>
        <begin position="1"/>
        <end position="722"/>
    </location>
</feature>
<feature type="repeat" description="Pumilio 1">
    <location>
        <begin position="123"/>
        <end position="158"/>
    </location>
</feature>
<feature type="repeat" description="Pumilio 2">
    <location>
        <begin position="363"/>
        <end position="398"/>
    </location>
</feature>
<feature type="repeat" description="Pumilio 3">
    <location>
        <begin position="400"/>
        <end position="435"/>
    </location>
</feature>
<feature type="repeat" description="Pumilio 4">
    <location>
        <begin position="556"/>
        <end position="597"/>
    </location>
</feature>
<feature type="repeat" description="Pumilio 5">
    <location>
        <begin position="598"/>
        <end position="635"/>
    </location>
</feature>
<feature type="region of interest" description="Disordered" evidence="2">
    <location>
        <begin position="1"/>
        <end position="54"/>
    </location>
</feature>
<feature type="region of interest" description="Disordered" evidence="2">
    <location>
        <begin position="496"/>
        <end position="529"/>
    </location>
</feature>
<feature type="region of interest" description="Disordered" evidence="2">
    <location>
        <begin position="676"/>
        <end position="722"/>
    </location>
</feature>
<feature type="compositionally biased region" description="Basic and acidic residues" evidence="2">
    <location>
        <begin position="14"/>
        <end position="27"/>
    </location>
</feature>
<feature type="compositionally biased region" description="Basic and acidic residues" evidence="2">
    <location>
        <begin position="676"/>
        <end position="697"/>
    </location>
</feature>
<feature type="compositionally biased region" description="Low complexity" evidence="2">
    <location>
        <begin position="698"/>
        <end position="714"/>
    </location>
</feature>
<gene>
    <name type="primary">nop9</name>
    <name type="ORF">Pc13g09340</name>
</gene>
<comment type="function">
    <text evidence="1">RNA-binding nucleolar protein required for pre-rRNA processing. Involved in production of 18S rRNA and assembly of small ribosomal subunit (By similarity).</text>
</comment>
<comment type="subcellular location">
    <subcellularLocation>
        <location evidence="1">Nucleus</location>
        <location evidence="1">Nucleolus</location>
    </subcellularLocation>
</comment>
<comment type="similarity">
    <text evidence="3">Belongs to the NOP9 family.</text>
</comment>
<reference key="1">
    <citation type="journal article" date="2008" name="Nat. Biotechnol.">
        <title>Genome sequencing and analysis of the filamentous fungus Penicillium chrysogenum.</title>
        <authorList>
            <person name="van den Berg M.A."/>
            <person name="Albang R."/>
            <person name="Albermann K."/>
            <person name="Badger J.H."/>
            <person name="Daran J.-M."/>
            <person name="Driessen A.J.M."/>
            <person name="Garcia-Estrada C."/>
            <person name="Fedorova N.D."/>
            <person name="Harris D.M."/>
            <person name="Heijne W.H.M."/>
            <person name="Joardar V.S."/>
            <person name="Kiel J.A.K.W."/>
            <person name="Kovalchuk A."/>
            <person name="Martin J.F."/>
            <person name="Nierman W.C."/>
            <person name="Nijland J.G."/>
            <person name="Pronk J.T."/>
            <person name="Roubos J.A."/>
            <person name="van der Klei I.J."/>
            <person name="van Peij N.N.M.E."/>
            <person name="Veenhuis M."/>
            <person name="von Doehren H."/>
            <person name="Wagner C."/>
            <person name="Wortman J.R."/>
            <person name="Bovenberg R.A.L."/>
        </authorList>
    </citation>
    <scope>NUCLEOTIDE SEQUENCE [LARGE SCALE GENOMIC DNA]</scope>
    <source>
        <strain>ATCC 28089 / DSM 1075 / NRRL 1951 / Wisconsin 54-1255</strain>
    </source>
</reference>
<name>NOP9_PENRW</name>
<evidence type="ECO:0000250" key="1"/>
<evidence type="ECO:0000256" key="2">
    <source>
        <dbReference type="SAM" id="MobiDB-lite"/>
    </source>
</evidence>
<evidence type="ECO:0000305" key="3"/>
<dbReference type="EMBL" id="AM920428">
    <property type="protein sequence ID" value="CAP92003.1"/>
    <property type="molecule type" value="Genomic_DNA"/>
</dbReference>
<dbReference type="RefSeq" id="XP_002559358.1">
    <property type="nucleotide sequence ID" value="XM_002559312.1"/>
</dbReference>
<dbReference type="SMR" id="B6H3T4"/>
<dbReference type="STRING" id="500485.B6H3T4"/>
<dbReference type="GeneID" id="8316061"/>
<dbReference type="KEGG" id="pcs:N7525_003241"/>
<dbReference type="VEuPathDB" id="FungiDB:PCH_Pc13g09340"/>
<dbReference type="eggNOG" id="KOG2188">
    <property type="taxonomic scope" value="Eukaryota"/>
</dbReference>
<dbReference type="HOGENOM" id="CLU_008720_1_1_1"/>
<dbReference type="OMA" id="HHLVRNF"/>
<dbReference type="OrthoDB" id="392571at2759"/>
<dbReference type="BioCyc" id="PCHR:PC13G09340-MONOMER"/>
<dbReference type="Proteomes" id="UP000000724">
    <property type="component" value="Contig Pc00c13"/>
</dbReference>
<dbReference type="GO" id="GO:0030686">
    <property type="term" value="C:90S preribosome"/>
    <property type="evidence" value="ECO:0007669"/>
    <property type="project" value="TreeGrafter"/>
</dbReference>
<dbReference type="GO" id="GO:0005730">
    <property type="term" value="C:nucleolus"/>
    <property type="evidence" value="ECO:0007669"/>
    <property type="project" value="UniProtKB-SubCell"/>
</dbReference>
<dbReference type="GO" id="GO:0030688">
    <property type="term" value="C:preribosome, small subunit precursor"/>
    <property type="evidence" value="ECO:0007669"/>
    <property type="project" value="TreeGrafter"/>
</dbReference>
<dbReference type="GO" id="GO:0003723">
    <property type="term" value="F:RNA binding"/>
    <property type="evidence" value="ECO:0007669"/>
    <property type="project" value="InterPro"/>
</dbReference>
<dbReference type="GO" id="GO:0000480">
    <property type="term" value="P:endonucleolytic cleavage in 5'-ETS of tricistronic rRNA transcript (SSU-rRNA, 5.8S rRNA, LSU-rRNA)"/>
    <property type="evidence" value="ECO:0007669"/>
    <property type="project" value="TreeGrafter"/>
</dbReference>
<dbReference type="GO" id="GO:0000447">
    <property type="term" value="P:endonucleolytic cleavage in ITS1 to separate SSU-rRNA from 5.8S rRNA and LSU-rRNA from tricistronic rRNA transcript (SSU-rRNA, 5.8S rRNA, LSU-rRNA)"/>
    <property type="evidence" value="ECO:0007669"/>
    <property type="project" value="TreeGrafter"/>
</dbReference>
<dbReference type="GO" id="GO:0000472">
    <property type="term" value="P:endonucleolytic cleavage to generate mature 5'-end of SSU-rRNA from (SSU-rRNA, 5.8S rRNA, LSU-rRNA)"/>
    <property type="evidence" value="ECO:0007669"/>
    <property type="project" value="TreeGrafter"/>
</dbReference>
<dbReference type="GO" id="GO:0000056">
    <property type="term" value="P:ribosomal small subunit export from nucleus"/>
    <property type="evidence" value="ECO:0007669"/>
    <property type="project" value="TreeGrafter"/>
</dbReference>
<dbReference type="Gene3D" id="1.25.10.10">
    <property type="entry name" value="Leucine-rich Repeat Variant"/>
    <property type="match status" value="2"/>
</dbReference>
<dbReference type="InterPro" id="IPR011989">
    <property type="entry name" value="ARM-like"/>
</dbReference>
<dbReference type="InterPro" id="IPR016024">
    <property type="entry name" value="ARM-type_fold"/>
</dbReference>
<dbReference type="InterPro" id="IPR040000">
    <property type="entry name" value="NOP9"/>
</dbReference>
<dbReference type="InterPro" id="IPR001313">
    <property type="entry name" value="Pumilio_RNA-bd_rpt"/>
</dbReference>
<dbReference type="PANTHER" id="PTHR13102">
    <property type="entry name" value="NUCLEOLAR PROTEIN 9"/>
    <property type="match status" value="1"/>
</dbReference>
<dbReference type="PANTHER" id="PTHR13102:SF0">
    <property type="entry name" value="NUCLEOLAR PROTEIN 9"/>
    <property type="match status" value="1"/>
</dbReference>
<dbReference type="Pfam" id="PF22493">
    <property type="entry name" value="PUF_NOP9"/>
    <property type="match status" value="1"/>
</dbReference>
<dbReference type="SMART" id="SM00025">
    <property type="entry name" value="Pumilio"/>
    <property type="match status" value="5"/>
</dbReference>
<dbReference type="SUPFAM" id="SSF48371">
    <property type="entry name" value="ARM repeat"/>
    <property type="match status" value="2"/>
</dbReference>